<proteinExistence type="evidence at protein level"/>
<gene>
    <name type="primary">PEX12</name>
    <name evidence="5" type="synonym">PAS10</name>
</gene>
<sequence length="409" mass="47591">MDFYSNLDSRSLDSETPTLFEIISAQELEKLLTPSIRYILVHYTQRYPRYLLKVANHFDELNLAIRGFIEFRQLSHWNSTFIDKFYGLKKVRNHQTISTERLQSQVPTLLEQRRRLSKTQIAVSLFEIVGVPYLRDKLDHLYDKLYPKLMMNNLDPKESLKTFVQYYFLKLYPILLSVLTTIQVLLQVLYLSGTFKSPSIIMWLFKMKYARLNSYDYTLDEQRVNKFLNKTSPGKLGTGNNRIRPITLTESLYLLYSDLTRPLKKGLLITGGTLFPASIFLLKFLEWWNSSDFATKMNKPRNPFSDSELPPPINLSKDLLADRKIKKLLKKSQSNDGTCPLCHKQITNPAVIETGYVFCYTCIFKHLTSSELDEETGGRCPITGRRLLGCRINKTTGEWTVDGIRRLMM</sequence>
<dbReference type="EMBL" id="U58140">
    <property type="protein sequence ID" value="AAC49402.1"/>
    <property type="molecule type" value="Genomic_DNA"/>
</dbReference>
<dbReference type="SMR" id="Q01961"/>
<dbReference type="UniPathway" id="UPA00143"/>
<dbReference type="GO" id="GO:1990429">
    <property type="term" value="C:peroxisomal importomer complex"/>
    <property type="evidence" value="ECO:0007669"/>
    <property type="project" value="TreeGrafter"/>
</dbReference>
<dbReference type="GO" id="GO:0005778">
    <property type="term" value="C:peroxisomal membrane"/>
    <property type="evidence" value="ECO:0007669"/>
    <property type="project" value="UniProtKB-SubCell"/>
</dbReference>
<dbReference type="GO" id="GO:0004842">
    <property type="term" value="F:ubiquitin-protein transferase activity"/>
    <property type="evidence" value="ECO:0007669"/>
    <property type="project" value="TreeGrafter"/>
</dbReference>
<dbReference type="GO" id="GO:0008270">
    <property type="term" value="F:zinc ion binding"/>
    <property type="evidence" value="ECO:0007669"/>
    <property type="project" value="UniProtKB-KW"/>
</dbReference>
<dbReference type="GO" id="GO:0016562">
    <property type="term" value="P:protein import into peroxisome matrix, receptor recycling"/>
    <property type="evidence" value="ECO:0000315"/>
    <property type="project" value="UniProtKB"/>
</dbReference>
<dbReference type="GO" id="GO:0006513">
    <property type="term" value="P:protein monoubiquitination"/>
    <property type="evidence" value="ECO:0007669"/>
    <property type="project" value="TreeGrafter"/>
</dbReference>
<dbReference type="GO" id="GO:0016567">
    <property type="term" value="P:protein ubiquitination"/>
    <property type="evidence" value="ECO:0000315"/>
    <property type="project" value="UniProtKB"/>
</dbReference>
<dbReference type="CDD" id="cd16451">
    <property type="entry name" value="mRING_PEX12"/>
    <property type="match status" value="1"/>
</dbReference>
<dbReference type="Gene3D" id="3.30.40.10">
    <property type="entry name" value="Zinc/RING finger domain, C3HC4 (zinc finger)"/>
    <property type="match status" value="1"/>
</dbReference>
<dbReference type="InterPro" id="IPR017375">
    <property type="entry name" value="PEX12"/>
</dbReference>
<dbReference type="InterPro" id="IPR006845">
    <property type="entry name" value="Pex_N"/>
</dbReference>
<dbReference type="InterPro" id="IPR001841">
    <property type="entry name" value="Znf_RING"/>
</dbReference>
<dbReference type="InterPro" id="IPR013083">
    <property type="entry name" value="Znf_RING/FYVE/PHD"/>
</dbReference>
<dbReference type="PANTHER" id="PTHR12888:SF0">
    <property type="entry name" value="PEROXISOME ASSEMBLY PROTEIN 12"/>
    <property type="match status" value="1"/>
</dbReference>
<dbReference type="PANTHER" id="PTHR12888">
    <property type="entry name" value="PEROXISOME ASSEMBLY PROTEIN 12 PEROXIN-12"/>
    <property type="match status" value="1"/>
</dbReference>
<dbReference type="Pfam" id="PF04757">
    <property type="entry name" value="Pex2_Pex12"/>
    <property type="match status" value="1"/>
</dbReference>
<dbReference type="PIRSF" id="PIRSF038074">
    <property type="entry name" value="Peroxisome_assembly_p12"/>
    <property type="match status" value="1"/>
</dbReference>
<dbReference type="SMART" id="SM00184">
    <property type="entry name" value="RING"/>
    <property type="match status" value="1"/>
</dbReference>
<dbReference type="SUPFAM" id="SSF57850">
    <property type="entry name" value="RING/U-box"/>
    <property type="match status" value="1"/>
</dbReference>
<name>PEX12_PICPA</name>
<feature type="chain" id="PRO_0000218616" description="Peroxisome assembly protein 12">
    <location>
        <begin position="1"/>
        <end position="409"/>
    </location>
</feature>
<feature type="topological domain" description="Peroxisomal matrix" evidence="1">
    <location>
        <begin position="1"/>
        <end position="18"/>
    </location>
</feature>
<feature type="transmembrane region" description="Helical; Name=TM1" evidence="1">
    <location>
        <begin position="19"/>
        <end position="46"/>
    </location>
</feature>
<feature type="topological domain" description="Cytoplasmic" evidence="1">
    <location>
        <begin position="47"/>
        <end position="50"/>
    </location>
</feature>
<feature type="transmembrane region" description="Helical; Name=TM2" evidence="1">
    <location>
        <begin position="51"/>
        <end position="75"/>
    </location>
</feature>
<feature type="topological domain" description="Peroxisomal matrix" evidence="1">
    <location>
        <begin position="76"/>
        <end position="117"/>
    </location>
</feature>
<feature type="transmembrane region" description="Helical; Name=TM3" evidence="1">
    <location>
        <begin position="118"/>
        <end position="152"/>
    </location>
</feature>
<feature type="topological domain" description="Cytoplasmic" evidence="1">
    <location>
        <begin position="153"/>
        <end position="155"/>
    </location>
</feature>
<feature type="transmembrane region" description="Helical; Name=TM4" evidence="1">
    <location>
        <begin position="156"/>
        <end position="192"/>
    </location>
</feature>
<feature type="topological domain" description="Peroxisomal matrix" evidence="1">
    <location>
        <begin position="193"/>
        <end position="273"/>
    </location>
</feature>
<feature type="transmembrane region" description="Helical; Name=TM5" evidence="1">
    <location>
        <begin position="274"/>
        <end position="301"/>
    </location>
</feature>
<feature type="topological domain" description="Cytoplasmic" evidence="1">
    <location>
        <begin position="302"/>
        <end position="409"/>
    </location>
</feature>
<feature type="zinc finger region" description="RING-type; degenerate">
    <location>
        <begin position="339"/>
        <end position="384"/>
    </location>
</feature>
<feature type="binding site" evidence="1">
    <location>
        <position position="339"/>
    </location>
    <ligand>
        <name>Zn(2+)</name>
        <dbReference type="ChEBI" id="CHEBI:29105"/>
    </ligand>
</feature>
<feature type="binding site" evidence="1">
    <location>
        <position position="342"/>
    </location>
    <ligand>
        <name>Zn(2+)</name>
        <dbReference type="ChEBI" id="CHEBI:29105"/>
    </ligand>
</feature>
<feature type="binding site" evidence="1">
    <location>
        <position position="359"/>
    </location>
    <ligand>
        <name>Zn(2+)</name>
        <dbReference type="ChEBI" id="CHEBI:29105"/>
    </ligand>
</feature>
<feature type="binding site" evidence="1">
    <location>
        <position position="362"/>
    </location>
    <ligand>
        <name>Zn(2+)</name>
        <dbReference type="ChEBI" id="CHEBI:29105"/>
    </ligand>
</feature>
<feature type="mutagenesis site" description="Impaired recycling of PEX20." evidence="4">
    <original>CPLC</original>
    <variation>SPLS</variation>
    <location>
        <begin position="339"/>
        <end position="342"/>
    </location>
</feature>
<protein>
    <recommendedName>
        <fullName evidence="6">Peroxisome assembly protein 12</fullName>
    </recommendedName>
    <alternativeName>
        <fullName evidence="6">Peroxin-12</fullName>
    </alternativeName>
</protein>
<evidence type="ECO:0000250" key="1">
    <source>
        <dbReference type="UniProtKB" id="G2Q5N0"/>
    </source>
</evidence>
<evidence type="ECO:0000250" key="2">
    <source>
        <dbReference type="UniProtKB" id="Q04370"/>
    </source>
</evidence>
<evidence type="ECO:0000255" key="3"/>
<evidence type="ECO:0000269" key="4">
    <source>
    </source>
</evidence>
<evidence type="ECO:0000303" key="5">
    <source>
    </source>
</evidence>
<evidence type="ECO:0000305" key="6"/>
<reference key="1">
    <citation type="journal article" date="1996" name="EMBO J.">
        <title>Characterization of a novel component of the peroxisomal protein import apparatus using fluorescent peroxisomal proteins.</title>
        <authorList>
            <person name="Kalish J.E."/>
            <person name="Keller G.-A."/>
            <person name="Morrell J.C."/>
            <person name="Mihalik S.J."/>
            <person name="Smith B."/>
            <person name="Cregg J.M."/>
            <person name="Gould S.J."/>
        </authorList>
    </citation>
    <scope>NUCLEOTIDE SEQUENCE [GENOMIC DNA]</scope>
</reference>
<reference key="2">
    <citation type="journal article" date="2013" name="J. Biol. Chem.">
        <title>Unique requirements for mono- and polyubiquitination of the peroxisomal targeting signal co-receptor, Pex20.</title>
        <authorList>
            <person name="Liu X."/>
            <person name="Subramani S."/>
        </authorList>
    </citation>
    <scope>FUNCTION</scope>
    <scope>MUTAGENESIS OF 339-CYS--CYS-342</scope>
</reference>
<keyword id="KW-0472">Membrane</keyword>
<keyword id="KW-0479">Metal-binding</keyword>
<keyword id="KW-0576">Peroxisome</keyword>
<keyword id="KW-0653">Protein transport</keyword>
<keyword id="KW-0812">Transmembrane</keyword>
<keyword id="KW-1133">Transmembrane helix</keyword>
<keyword id="KW-0813">Transport</keyword>
<keyword id="KW-0833">Ubl conjugation pathway</keyword>
<keyword id="KW-0862">Zinc</keyword>
<keyword id="KW-0863">Zinc-finger</keyword>
<organism>
    <name type="scientific">Komagataella pastoris</name>
    <name type="common">Yeast</name>
    <name type="synonym">Pichia pastoris</name>
    <dbReference type="NCBI Taxonomy" id="4922"/>
    <lineage>
        <taxon>Eukaryota</taxon>
        <taxon>Fungi</taxon>
        <taxon>Dikarya</taxon>
        <taxon>Ascomycota</taxon>
        <taxon>Saccharomycotina</taxon>
        <taxon>Pichiomycetes</taxon>
        <taxon>Pichiales</taxon>
        <taxon>Pichiaceae</taxon>
        <taxon>Komagataella</taxon>
    </lineage>
</organism>
<accession>Q01961</accession>
<comment type="function">
    <text evidence="2 4">Component of a retrotranslocation channel required for peroxisome organization by mediating export of the PEX5 and/or PEX20 receptors from peroxisomes to the cytosol, thereby promoting PEX5 and PEX20 recycling (PubMed:23344950). The retrotranslocation channel is composed of PEX2, PEX10 and PEX12; each subunit contributing transmembrane segments that coassemble into an open channel that specifically allows the passage of PEX5 and/or PEX20 through the peroxisomal membrane (By similarity). PEX12 also regulates PEX5 and/or PEX20 recycling by activating the E3 ubiquitin-protein ligase activity of PEX10 (By similarity). When PEX5 or PEX20 recycling is compromised, PEX12 stimulates PEX10-mediated polyubiquitination of PEX5 and/or PEX20, leading to its subsequent degradation (By similarity).</text>
</comment>
<comment type="pathway">
    <text evidence="2">Protein modification; protein ubiquitination.</text>
</comment>
<comment type="subunit">
    <text evidence="2">Component of the PEX2-PEX10-PEX12 retrotranslocation channel, composed of PEX2, PEX10 and PEX12.</text>
</comment>
<comment type="subcellular location">
    <subcellularLocation>
        <location evidence="2">Peroxisome membrane</location>
        <topology evidence="3">Multi-pass membrane protein</topology>
    </subcellularLocation>
</comment>
<comment type="domain">
    <text evidence="1">The three subunits of the retrotranslocation channel (PEX2, PEX10 and PEX12) coassemble in the membrane into a channel with an open 10 Angstrom pore. The RING-type zinc-fingers that catalyze PEX5 or PEX20 receptor ubiquitination are positioned above the pore on the cytosolic side of the complex.</text>
</comment>
<comment type="domain">
    <text evidence="2">The RING-type zinc-finger is degenerated and only coordinates one zinc ions, preventing E3 ubiquitin-protein ligase activity.</text>
</comment>
<comment type="similarity">
    <text evidence="6">Belongs to the pex2/pex10/pex12 family.</text>
</comment>